<accession>A2S5P8</accession>
<reference key="1">
    <citation type="journal article" date="2010" name="Genome Biol. Evol.">
        <title>Continuing evolution of Burkholderia mallei through genome reduction and large-scale rearrangements.</title>
        <authorList>
            <person name="Losada L."/>
            <person name="Ronning C.M."/>
            <person name="DeShazer D."/>
            <person name="Woods D."/>
            <person name="Fedorova N."/>
            <person name="Kim H.S."/>
            <person name="Shabalina S.A."/>
            <person name="Pearson T.R."/>
            <person name="Brinkac L."/>
            <person name="Tan P."/>
            <person name="Nandi T."/>
            <person name="Crabtree J."/>
            <person name="Badger J."/>
            <person name="Beckstrom-Sternberg S."/>
            <person name="Saqib M."/>
            <person name="Schutzer S.E."/>
            <person name="Keim P."/>
            <person name="Nierman W.C."/>
        </authorList>
    </citation>
    <scope>NUCLEOTIDE SEQUENCE [LARGE SCALE GENOMIC DNA]</scope>
    <source>
        <strain>NCTC 10229</strain>
    </source>
</reference>
<organism>
    <name type="scientific">Burkholderia mallei (strain NCTC 10229)</name>
    <dbReference type="NCBI Taxonomy" id="412022"/>
    <lineage>
        <taxon>Bacteria</taxon>
        <taxon>Pseudomonadati</taxon>
        <taxon>Pseudomonadota</taxon>
        <taxon>Betaproteobacteria</taxon>
        <taxon>Burkholderiales</taxon>
        <taxon>Burkholderiaceae</taxon>
        <taxon>Burkholderia</taxon>
        <taxon>pseudomallei group</taxon>
    </lineage>
</organism>
<sequence>MSYRELVAELPREHAEALSDALVELGALSVSVEDADADTPDEQPLFGEPGLVPERTAWQHSRVIALVDATQDPAVLLAAAANEAGLAQTPRFELREVEEQDWVRLTQSQFEPIHIGEKIWVVPSWHDAPQPDALVLELDPGLAFGTGSHPTTRLCMEWLEQTVQPGQTVLDYGCGSGILAILAKKCGAGRVTGIDIDPQAVEAARHNSERNRADVTYGLPDDCPDGEFDIVVANILSNPLKLMASMLASKVKPGGRIALSGVLARQADEVASVYARYIDIAVWREHEGWVCLAGTRRESH</sequence>
<dbReference type="EC" id="2.1.1.-" evidence="1"/>
<dbReference type="EMBL" id="CP000546">
    <property type="protein sequence ID" value="ABN03147.1"/>
    <property type="molecule type" value="Genomic_DNA"/>
</dbReference>
<dbReference type="RefSeq" id="WP_004194259.1">
    <property type="nucleotide sequence ID" value="NC_008836.1"/>
</dbReference>
<dbReference type="SMR" id="A2S5P8"/>
<dbReference type="GeneID" id="92980193"/>
<dbReference type="KEGG" id="bml:BMA10229_A1283"/>
<dbReference type="HOGENOM" id="CLU_049382_4_1_4"/>
<dbReference type="Proteomes" id="UP000002283">
    <property type="component" value="Chromosome I"/>
</dbReference>
<dbReference type="GO" id="GO:0005829">
    <property type="term" value="C:cytosol"/>
    <property type="evidence" value="ECO:0007669"/>
    <property type="project" value="TreeGrafter"/>
</dbReference>
<dbReference type="GO" id="GO:0016279">
    <property type="term" value="F:protein-lysine N-methyltransferase activity"/>
    <property type="evidence" value="ECO:0007669"/>
    <property type="project" value="TreeGrafter"/>
</dbReference>
<dbReference type="GO" id="GO:0032259">
    <property type="term" value="P:methylation"/>
    <property type="evidence" value="ECO:0007669"/>
    <property type="project" value="UniProtKB-KW"/>
</dbReference>
<dbReference type="CDD" id="cd02440">
    <property type="entry name" value="AdoMet_MTases"/>
    <property type="match status" value="1"/>
</dbReference>
<dbReference type="Gene3D" id="3.40.50.150">
    <property type="entry name" value="Vaccinia Virus protein VP39"/>
    <property type="match status" value="1"/>
</dbReference>
<dbReference type="HAMAP" id="MF_00735">
    <property type="entry name" value="Methyltr_PrmA"/>
    <property type="match status" value="1"/>
</dbReference>
<dbReference type="InterPro" id="IPR050078">
    <property type="entry name" value="Ribosomal_L11_MeTrfase_PrmA"/>
</dbReference>
<dbReference type="InterPro" id="IPR004498">
    <property type="entry name" value="Ribosomal_PrmA_MeTrfase"/>
</dbReference>
<dbReference type="InterPro" id="IPR029063">
    <property type="entry name" value="SAM-dependent_MTases_sf"/>
</dbReference>
<dbReference type="NCBIfam" id="TIGR00406">
    <property type="entry name" value="prmA"/>
    <property type="match status" value="1"/>
</dbReference>
<dbReference type="PANTHER" id="PTHR43648">
    <property type="entry name" value="ELECTRON TRANSFER FLAVOPROTEIN BETA SUBUNIT LYSINE METHYLTRANSFERASE"/>
    <property type="match status" value="1"/>
</dbReference>
<dbReference type="PANTHER" id="PTHR43648:SF1">
    <property type="entry name" value="ELECTRON TRANSFER FLAVOPROTEIN BETA SUBUNIT LYSINE METHYLTRANSFERASE"/>
    <property type="match status" value="1"/>
</dbReference>
<dbReference type="Pfam" id="PF06325">
    <property type="entry name" value="PrmA"/>
    <property type="match status" value="1"/>
</dbReference>
<dbReference type="PIRSF" id="PIRSF000401">
    <property type="entry name" value="RPL11_MTase"/>
    <property type="match status" value="1"/>
</dbReference>
<dbReference type="SUPFAM" id="SSF53335">
    <property type="entry name" value="S-adenosyl-L-methionine-dependent methyltransferases"/>
    <property type="match status" value="1"/>
</dbReference>
<feature type="chain" id="PRO_1000045994" description="Ribosomal protein L11 methyltransferase">
    <location>
        <begin position="1"/>
        <end position="300"/>
    </location>
</feature>
<feature type="binding site" evidence="1">
    <location>
        <position position="152"/>
    </location>
    <ligand>
        <name>S-adenosyl-L-methionine</name>
        <dbReference type="ChEBI" id="CHEBI:59789"/>
    </ligand>
</feature>
<feature type="binding site" evidence="1">
    <location>
        <position position="173"/>
    </location>
    <ligand>
        <name>S-adenosyl-L-methionine</name>
        <dbReference type="ChEBI" id="CHEBI:59789"/>
    </ligand>
</feature>
<feature type="binding site" evidence="1">
    <location>
        <position position="195"/>
    </location>
    <ligand>
        <name>S-adenosyl-L-methionine</name>
        <dbReference type="ChEBI" id="CHEBI:59789"/>
    </ligand>
</feature>
<feature type="binding site" evidence="1">
    <location>
        <position position="234"/>
    </location>
    <ligand>
        <name>S-adenosyl-L-methionine</name>
        <dbReference type="ChEBI" id="CHEBI:59789"/>
    </ligand>
</feature>
<protein>
    <recommendedName>
        <fullName evidence="1">Ribosomal protein L11 methyltransferase</fullName>
        <shortName evidence="1">L11 Mtase</shortName>
        <ecNumber evidence="1">2.1.1.-</ecNumber>
    </recommendedName>
</protein>
<gene>
    <name evidence="1" type="primary">prmA</name>
    <name type="ordered locus">BMA10229_A1283</name>
</gene>
<keyword id="KW-0963">Cytoplasm</keyword>
<keyword id="KW-0489">Methyltransferase</keyword>
<keyword id="KW-0949">S-adenosyl-L-methionine</keyword>
<keyword id="KW-0808">Transferase</keyword>
<proteinExistence type="inferred from homology"/>
<evidence type="ECO:0000255" key="1">
    <source>
        <dbReference type="HAMAP-Rule" id="MF_00735"/>
    </source>
</evidence>
<name>PRMA_BURM9</name>
<comment type="function">
    <text evidence="1">Methylates ribosomal protein L11.</text>
</comment>
<comment type="catalytic activity">
    <reaction evidence="1">
        <text>L-lysyl-[protein] + 3 S-adenosyl-L-methionine = N(6),N(6),N(6)-trimethyl-L-lysyl-[protein] + 3 S-adenosyl-L-homocysteine + 3 H(+)</text>
        <dbReference type="Rhea" id="RHEA:54192"/>
        <dbReference type="Rhea" id="RHEA-COMP:9752"/>
        <dbReference type="Rhea" id="RHEA-COMP:13826"/>
        <dbReference type="ChEBI" id="CHEBI:15378"/>
        <dbReference type="ChEBI" id="CHEBI:29969"/>
        <dbReference type="ChEBI" id="CHEBI:57856"/>
        <dbReference type="ChEBI" id="CHEBI:59789"/>
        <dbReference type="ChEBI" id="CHEBI:61961"/>
    </reaction>
</comment>
<comment type="subcellular location">
    <subcellularLocation>
        <location evidence="1">Cytoplasm</location>
    </subcellularLocation>
</comment>
<comment type="similarity">
    <text evidence="1">Belongs to the methyltransferase superfamily. PrmA family.</text>
</comment>